<reference key="1">
    <citation type="journal article" date="2007" name="BMC Microbiol.">
        <title>Subtle genetic changes enhance virulence of methicillin resistant and sensitive Staphylococcus aureus.</title>
        <authorList>
            <person name="Highlander S.K."/>
            <person name="Hulten K.G."/>
            <person name="Qin X."/>
            <person name="Jiang H."/>
            <person name="Yerrapragada S."/>
            <person name="Mason E.O. Jr."/>
            <person name="Shang Y."/>
            <person name="Williams T.M."/>
            <person name="Fortunov R.M."/>
            <person name="Liu Y."/>
            <person name="Igboeli O."/>
            <person name="Petrosino J."/>
            <person name="Tirumalai M."/>
            <person name="Uzman A."/>
            <person name="Fox G.E."/>
            <person name="Cardenas A.M."/>
            <person name="Muzny D.M."/>
            <person name="Hemphill L."/>
            <person name="Ding Y."/>
            <person name="Dugan S."/>
            <person name="Blyth P.R."/>
            <person name="Buhay C.J."/>
            <person name="Dinh H.H."/>
            <person name="Hawes A.C."/>
            <person name="Holder M."/>
            <person name="Kovar C.L."/>
            <person name="Lee S.L."/>
            <person name="Liu W."/>
            <person name="Nazareth L.V."/>
            <person name="Wang Q."/>
            <person name="Zhou J."/>
            <person name="Kaplan S.L."/>
            <person name="Weinstock G.M."/>
        </authorList>
    </citation>
    <scope>NUCLEOTIDE SEQUENCE [LARGE SCALE GENOMIC DNA]</scope>
    <source>
        <strain>USA300 / TCH1516</strain>
    </source>
</reference>
<keyword id="KW-0238">DNA-binding</keyword>
<keyword id="KW-0731">Sigma factor</keyword>
<keyword id="KW-0804">Transcription</keyword>
<keyword id="KW-0805">Transcription regulation</keyword>
<name>SIGS_STAAT</name>
<protein>
    <recommendedName>
        <fullName>RNA polymerase sigma factor SigS</fullName>
    </recommendedName>
</protein>
<sequence length="156" mass="19136">MKFNDVYNKHHKIIHHLLKKYNISYNYDEYYQLLLIKMWQLSQIYKPSSKQSLSSFLFTRLNFYLIDLFRQQNQLKDVILCENNSPTLTEQPTYFNEHDLRLQDIFKLLNQRERLWLKLYLEGYKQFEIAEIMSLSLSTIKLIKMSVKRKCQHNFN</sequence>
<dbReference type="EMBL" id="CP000730">
    <property type="protein sequence ID" value="ABX29772.1"/>
    <property type="status" value="ALT_INIT"/>
    <property type="molecule type" value="Genomic_DNA"/>
</dbReference>
<dbReference type="RefSeq" id="WP_000671052.1">
    <property type="nucleotide sequence ID" value="NC_010079.1"/>
</dbReference>
<dbReference type="SMR" id="A8Z4K2"/>
<dbReference type="KEGG" id="sax:USA300HOU_1766"/>
<dbReference type="HOGENOM" id="CLU_047691_20_2_9"/>
<dbReference type="GO" id="GO:0003677">
    <property type="term" value="F:DNA binding"/>
    <property type="evidence" value="ECO:0007669"/>
    <property type="project" value="UniProtKB-KW"/>
</dbReference>
<dbReference type="GO" id="GO:0016987">
    <property type="term" value="F:sigma factor activity"/>
    <property type="evidence" value="ECO:0007669"/>
    <property type="project" value="UniProtKB-KW"/>
</dbReference>
<dbReference type="GO" id="GO:0006352">
    <property type="term" value="P:DNA-templated transcription initiation"/>
    <property type="evidence" value="ECO:0007669"/>
    <property type="project" value="InterPro"/>
</dbReference>
<dbReference type="Gene3D" id="1.10.10.10">
    <property type="entry name" value="Winged helix-like DNA-binding domain superfamily/Winged helix DNA-binding domain"/>
    <property type="match status" value="1"/>
</dbReference>
<dbReference type="InterPro" id="IPR014284">
    <property type="entry name" value="RNA_pol_sigma-70_dom"/>
</dbReference>
<dbReference type="InterPro" id="IPR007627">
    <property type="entry name" value="RNA_pol_sigma70_r2"/>
</dbReference>
<dbReference type="InterPro" id="IPR013325">
    <property type="entry name" value="RNA_pol_sigma_r2"/>
</dbReference>
<dbReference type="InterPro" id="IPR016032">
    <property type="entry name" value="Sig_transdc_resp-reg_C-effctor"/>
</dbReference>
<dbReference type="InterPro" id="IPR036388">
    <property type="entry name" value="WH-like_DNA-bd_sf"/>
</dbReference>
<dbReference type="NCBIfam" id="TIGR02937">
    <property type="entry name" value="sigma70-ECF"/>
    <property type="match status" value="1"/>
</dbReference>
<dbReference type="Pfam" id="PF04542">
    <property type="entry name" value="Sigma70_r2"/>
    <property type="match status" value="1"/>
</dbReference>
<dbReference type="SUPFAM" id="SSF46894">
    <property type="entry name" value="C-terminal effector domain of the bipartite response regulators"/>
    <property type="match status" value="1"/>
</dbReference>
<dbReference type="SUPFAM" id="SSF88946">
    <property type="entry name" value="Sigma2 domain of RNA polymerase sigma factors"/>
    <property type="match status" value="1"/>
</dbReference>
<accession>A8Z4K2</accession>
<evidence type="ECO:0000250" key="1"/>
<evidence type="ECO:0000305" key="2"/>
<comment type="function">
    <text evidence="1">Sigma factors are initiation factors that promote the attachment of RNA polymerase to specific initiation sites and are then released. Sigma-S contributes to the protection against external stress, thus playing a role in cellular fitness and survival (By similarity).</text>
</comment>
<comment type="similarity">
    <text evidence="2">Belongs to the sigma-70 factor family.</text>
</comment>
<comment type="sequence caution" evidence="2">
    <conflict type="erroneous initiation">
        <sequence resource="EMBL-CDS" id="ABX29772"/>
    </conflict>
</comment>
<feature type="chain" id="PRO_0000367456" description="RNA polymerase sigma factor SigS">
    <location>
        <begin position="1"/>
        <end position="156"/>
    </location>
</feature>
<feature type="DNA-binding region" description="H-T-H motif" evidence="1">
    <location>
        <begin position="126"/>
        <end position="145"/>
    </location>
</feature>
<feature type="short sequence motif" description="Polymerase core binding">
    <location>
        <begin position="29"/>
        <end position="44"/>
    </location>
</feature>
<gene>
    <name type="primary">sigS</name>
    <name type="ordered locus">USA300HOU_1766</name>
</gene>
<organism>
    <name type="scientific">Staphylococcus aureus (strain USA300 / TCH1516)</name>
    <dbReference type="NCBI Taxonomy" id="451516"/>
    <lineage>
        <taxon>Bacteria</taxon>
        <taxon>Bacillati</taxon>
        <taxon>Bacillota</taxon>
        <taxon>Bacilli</taxon>
        <taxon>Bacillales</taxon>
        <taxon>Staphylococcaceae</taxon>
        <taxon>Staphylococcus</taxon>
    </lineage>
</organism>
<proteinExistence type="inferred from homology"/>